<feature type="chain" id="PRO_0000108902" description="Phospho-N-acetylmuramoyl-pentapeptide-transferase">
    <location>
        <begin position="1"/>
        <end position="363"/>
    </location>
</feature>
<feature type="transmembrane region" description="Helical" evidence="1">
    <location>
        <begin position="3"/>
        <end position="23"/>
    </location>
</feature>
<feature type="transmembrane region" description="Helical" evidence="1">
    <location>
        <begin position="48"/>
        <end position="68"/>
    </location>
</feature>
<feature type="transmembrane region" description="Helical" evidence="1">
    <location>
        <begin position="83"/>
        <end position="103"/>
    </location>
</feature>
<feature type="transmembrane region" description="Helical" evidence="1">
    <location>
        <begin position="121"/>
        <end position="141"/>
    </location>
</feature>
<feature type="transmembrane region" description="Helical" evidence="1">
    <location>
        <begin position="159"/>
        <end position="179"/>
    </location>
</feature>
<feature type="transmembrane region" description="Helical" evidence="1">
    <location>
        <begin position="192"/>
        <end position="212"/>
    </location>
</feature>
<feature type="transmembrane region" description="Helical" evidence="1">
    <location>
        <begin position="234"/>
        <end position="254"/>
    </location>
</feature>
<feature type="transmembrane region" description="Helical" evidence="1">
    <location>
        <begin position="261"/>
        <end position="281"/>
    </location>
</feature>
<feature type="transmembrane region" description="Helical" evidence="1">
    <location>
        <begin position="286"/>
        <end position="306"/>
    </location>
</feature>
<feature type="transmembrane region" description="Helical" evidence="1">
    <location>
        <begin position="340"/>
        <end position="360"/>
    </location>
</feature>
<reference key="1">
    <citation type="journal article" date="2002" name="Nature">
        <title>Complete genome sequence of the model actinomycete Streptomyces coelicolor A3(2).</title>
        <authorList>
            <person name="Bentley S.D."/>
            <person name="Chater K.F."/>
            <person name="Cerdeno-Tarraga A.-M."/>
            <person name="Challis G.L."/>
            <person name="Thomson N.R."/>
            <person name="James K.D."/>
            <person name="Harris D.E."/>
            <person name="Quail M.A."/>
            <person name="Kieser H."/>
            <person name="Harper D."/>
            <person name="Bateman A."/>
            <person name="Brown S."/>
            <person name="Chandra G."/>
            <person name="Chen C.W."/>
            <person name="Collins M."/>
            <person name="Cronin A."/>
            <person name="Fraser A."/>
            <person name="Goble A."/>
            <person name="Hidalgo J."/>
            <person name="Hornsby T."/>
            <person name="Howarth S."/>
            <person name="Huang C.-H."/>
            <person name="Kieser T."/>
            <person name="Larke L."/>
            <person name="Murphy L.D."/>
            <person name="Oliver K."/>
            <person name="O'Neil S."/>
            <person name="Rabbinowitsch E."/>
            <person name="Rajandream M.A."/>
            <person name="Rutherford K.M."/>
            <person name="Rutter S."/>
            <person name="Seeger K."/>
            <person name="Saunders D."/>
            <person name="Sharp S."/>
            <person name="Squares R."/>
            <person name="Squares S."/>
            <person name="Taylor K."/>
            <person name="Warren T."/>
            <person name="Wietzorrek A."/>
            <person name="Woodward J.R."/>
            <person name="Barrell B.G."/>
            <person name="Parkhill J."/>
            <person name="Hopwood D.A."/>
        </authorList>
    </citation>
    <scope>NUCLEOTIDE SEQUENCE [LARGE SCALE GENOMIC DNA]</scope>
    <source>
        <strain>ATCC BAA-471 / A3(2) / M145</strain>
    </source>
</reference>
<accession>P56833</accession>
<sequence>MKQILFAGVIGLFLTLVGTPLLIKLLARKGYGQYIRDDGPREHASKRGTPTMGGIAFILATVAAYFLAKGITSYLDPDIDAGPTFSGLLVLGLMVGMGLVGFLDDYIKIVKRRSLGLRARAKMIGQLTVGIAFAVLSLQFADNRGNTPASTKLSFITDFGWTIGPVLFVVWALFMILAMSNGVNLTDGLDGLATGASVLVFGAYTFIGVWQFQESCANALTLTNPGACYEVRDPLDLAVVASALMGSCLGFLWWNTSPAKIFMGDTGSLALGGVLAGLAICSRTELLMAILGGLFVLITMSVVIQVGSFRLTGKRVFRMAPLQHHFELKGWSEVLVVVRFWIIQGICVIVGLGLFYAGWATDK</sequence>
<gene>
    <name evidence="1" type="primary">mraY</name>
    <name type="synonym">murX</name>
    <name type="ordered locus">SCO2087</name>
    <name type="ORF">SC4A10.20c</name>
</gene>
<comment type="function">
    <text evidence="1">Catalyzes the initial step of the lipid cycle reactions in the biosynthesis of the cell wall peptidoglycan: transfers peptidoglycan precursor phospho-MurNAc-pentapeptide from UDP-MurNAc-pentapeptide onto the lipid carrier undecaprenyl phosphate, yielding undecaprenyl-pyrophosphoryl-MurNAc-pentapeptide, known as lipid I.</text>
</comment>
<comment type="catalytic activity">
    <reaction evidence="1">
        <text>UDP-N-acetyl-alpha-D-muramoyl-L-alanyl-gamma-D-glutamyl-meso-2,6-diaminopimeloyl-D-alanyl-D-alanine + di-trans,octa-cis-undecaprenyl phosphate = di-trans,octa-cis-undecaprenyl diphospho-N-acetyl-alpha-D-muramoyl-L-alanyl-D-glutamyl-meso-2,6-diaminopimeloyl-D-alanyl-D-alanine + UMP</text>
        <dbReference type="Rhea" id="RHEA:28386"/>
        <dbReference type="ChEBI" id="CHEBI:57865"/>
        <dbReference type="ChEBI" id="CHEBI:60392"/>
        <dbReference type="ChEBI" id="CHEBI:61386"/>
        <dbReference type="ChEBI" id="CHEBI:61387"/>
        <dbReference type="EC" id="2.7.8.13"/>
    </reaction>
</comment>
<comment type="cofactor">
    <cofactor evidence="1">
        <name>Mg(2+)</name>
        <dbReference type="ChEBI" id="CHEBI:18420"/>
    </cofactor>
</comment>
<comment type="pathway">
    <text evidence="1">Cell wall biogenesis; peptidoglycan biosynthesis.</text>
</comment>
<comment type="subcellular location">
    <subcellularLocation>
        <location evidence="1">Cell membrane</location>
        <topology evidence="1">Multi-pass membrane protein</topology>
    </subcellularLocation>
</comment>
<comment type="similarity">
    <text evidence="1">Belongs to the glycosyltransferase 4 family. MraY subfamily.</text>
</comment>
<keyword id="KW-0131">Cell cycle</keyword>
<keyword id="KW-0132">Cell division</keyword>
<keyword id="KW-1003">Cell membrane</keyword>
<keyword id="KW-0133">Cell shape</keyword>
<keyword id="KW-0961">Cell wall biogenesis/degradation</keyword>
<keyword id="KW-0460">Magnesium</keyword>
<keyword id="KW-0472">Membrane</keyword>
<keyword id="KW-0479">Metal-binding</keyword>
<keyword id="KW-0573">Peptidoglycan synthesis</keyword>
<keyword id="KW-1185">Reference proteome</keyword>
<keyword id="KW-0808">Transferase</keyword>
<keyword id="KW-0812">Transmembrane</keyword>
<keyword id="KW-1133">Transmembrane helix</keyword>
<organism>
    <name type="scientific">Streptomyces coelicolor (strain ATCC BAA-471 / A3(2) / M145)</name>
    <dbReference type="NCBI Taxonomy" id="100226"/>
    <lineage>
        <taxon>Bacteria</taxon>
        <taxon>Bacillati</taxon>
        <taxon>Actinomycetota</taxon>
        <taxon>Actinomycetes</taxon>
        <taxon>Kitasatosporales</taxon>
        <taxon>Streptomycetaceae</taxon>
        <taxon>Streptomyces</taxon>
        <taxon>Streptomyces albidoflavus group</taxon>
    </lineage>
</organism>
<evidence type="ECO:0000255" key="1">
    <source>
        <dbReference type="HAMAP-Rule" id="MF_00038"/>
    </source>
</evidence>
<name>MRAY_STRCO</name>
<protein>
    <recommendedName>
        <fullName evidence="1">Phospho-N-acetylmuramoyl-pentapeptide-transferase</fullName>
        <ecNumber evidence="1">2.7.8.13</ecNumber>
    </recommendedName>
    <alternativeName>
        <fullName evidence="1">UDP-MurNAc-pentapeptide phosphotransferase</fullName>
    </alternativeName>
</protein>
<dbReference type="EC" id="2.7.8.13" evidence="1"/>
<dbReference type="EMBL" id="AL939111">
    <property type="protein sequence ID" value="CAB51996.1"/>
    <property type="molecule type" value="Genomic_DNA"/>
</dbReference>
<dbReference type="PIR" id="T34957">
    <property type="entry name" value="T34957"/>
</dbReference>
<dbReference type="RefSeq" id="NP_626346.1">
    <property type="nucleotide sequence ID" value="NC_003888.3"/>
</dbReference>
<dbReference type="RefSeq" id="WP_003976728.1">
    <property type="nucleotide sequence ID" value="NZ_VNID01000001.1"/>
</dbReference>
<dbReference type="SMR" id="P56833"/>
<dbReference type="FunCoup" id="P56833">
    <property type="interactions" value="106"/>
</dbReference>
<dbReference type="STRING" id="100226.gene:17759685"/>
<dbReference type="PaxDb" id="100226-SCO2087"/>
<dbReference type="GeneID" id="96651064"/>
<dbReference type="KEGG" id="sco:SCO2087"/>
<dbReference type="PATRIC" id="fig|100226.15.peg.2120"/>
<dbReference type="eggNOG" id="COG0472">
    <property type="taxonomic scope" value="Bacteria"/>
</dbReference>
<dbReference type="HOGENOM" id="CLU_023982_0_1_11"/>
<dbReference type="InParanoid" id="P56833"/>
<dbReference type="OrthoDB" id="9805475at2"/>
<dbReference type="PhylomeDB" id="P56833"/>
<dbReference type="UniPathway" id="UPA00219"/>
<dbReference type="Proteomes" id="UP000001973">
    <property type="component" value="Chromosome"/>
</dbReference>
<dbReference type="GO" id="GO:0005886">
    <property type="term" value="C:plasma membrane"/>
    <property type="evidence" value="ECO:0000318"/>
    <property type="project" value="GO_Central"/>
</dbReference>
<dbReference type="GO" id="GO:0046872">
    <property type="term" value="F:metal ion binding"/>
    <property type="evidence" value="ECO:0007669"/>
    <property type="project" value="UniProtKB-KW"/>
</dbReference>
<dbReference type="GO" id="GO:0008963">
    <property type="term" value="F:phospho-N-acetylmuramoyl-pentapeptide-transferase activity"/>
    <property type="evidence" value="ECO:0007669"/>
    <property type="project" value="UniProtKB-UniRule"/>
</dbReference>
<dbReference type="GO" id="GO:0016780">
    <property type="term" value="F:phosphotransferase activity, for other substituted phosphate groups"/>
    <property type="evidence" value="ECO:0000318"/>
    <property type="project" value="GO_Central"/>
</dbReference>
<dbReference type="GO" id="GO:0051992">
    <property type="term" value="F:UDP-N-acetylmuramoyl-L-alanyl-D-glutamyl-meso-2,6-diaminopimelyl-D-alanyl-D-alanine:undecaprenyl-phosphate transferase activity"/>
    <property type="evidence" value="ECO:0007669"/>
    <property type="project" value="RHEA"/>
</dbReference>
<dbReference type="GO" id="GO:0051301">
    <property type="term" value="P:cell division"/>
    <property type="evidence" value="ECO:0007669"/>
    <property type="project" value="UniProtKB-KW"/>
</dbReference>
<dbReference type="GO" id="GO:0044038">
    <property type="term" value="P:cell wall macromolecule biosynthetic process"/>
    <property type="evidence" value="ECO:0000318"/>
    <property type="project" value="GO_Central"/>
</dbReference>
<dbReference type="GO" id="GO:0071555">
    <property type="term" value="P:cell wall organization"/>
    <property type="evidence" value="ECO:0000318"/>
    <property type="project" value="GO_Central"/>
</dbReference>
<dbReference type="GO" id="GO:0009252">
    <property type="term" value="P:peptidoglycan biosynthetic process"/>
    <property type="evidence" value="ECO:0007669"/>
    <property type="project" value="UniProtKB-UniRule"/>
</dbReference>
<dbReference type="GO" id="GO:0008360">
    <property type="term" value="P:regulation of cell shape"/>
    <property type="evidence" value="ECO:0007669"/>
    <property type="project" value="UniProtKB-KW"/>
</dbReference>
<dbReference type="CDD" id="cd06852">
    <property type="entry name" value="GT_MraY"/>
    <property type="match status" value="1"/>
</dbReference>
<dbReference type="HAMAP" id="MF_00038">
    <property type="entry name" value="MraY"/>
    <property type="match status" value="1"/>
</dbReference>
<dbReference type="InterPro" id="IPR000715">
    <property type="entry name" value="Glycosyl_transferase_4"/>
</dbReference>
<dbReference type="InterPro" id="IPR003524">
    <property type="entry name" value="PNAcMuramoyl-5peptid_Trfase"/>
</dbReference>
<dbReference type="InterPro" id="IPR018480">
    <property type="entry name" value="PNAcMuramoyl-5peptid_Trfase_CS"/>
</dbReference>
<dbReference type="NCBIfam" id="TIGR00445">
    <property type="entry name" value="mraY"/>
    <property type="match status" value="1"/>
</dbReference>
<dbReference type="PANTHER" id="PTHR22926">
    <property type="entry name" value="PHOSPHO-N-ACETYLMURAMOYL-PENTAPEPTIDE-TRANSFERASE"/>
    <property type="match status" value="1"/>
</dbReference>
<dbReference type="PANTHER" id="PTHR22926:SF5">
    <property type="entry name" value="PHOSPHO-N-ACETYLMURAMOYL-PENTAPEPTIDE-TRANSFERASE HOMOLOG"/>
    <property type="match status" value="1"/>
</dbReference>
<dbReference type="Pfam" id="PF00953">
    <property type="entry name" value="Glycos_transf_4"/>
    <property type="match status" value="1"/>
</dbReference>
<dbReference type="Pfam" id="PF10555">
    <property type="entry name" value="MraY_sig1"/>
    <property type="match status" value="1"/>
</dbReference>
<dbReference type="PROSITE" id="PS01347">
    <property type="entry name" value="MRAY_1"/>
    <property type="match status" value="1"/>
</dbReference>
<dbReference type="PROSITE" id="PS01348">
    <property type="entry name" value="MRAY_2"/>
    <property type="match status" value="1"/>
</dbReference>
<proteinExistence type="inferred from homology"/>